<proteinExistence type="inferred from homology"/>
<dbReference type="EC" id="5.1.1.7" evidence="1"/>
<dbReference type="EMBL" id="CP000479">
    <property type="protein sequence ID" value="ABK67759.1"/>
    <property type="molecule type" value="Genomic_DNA"/>
</dbReference>
<dbReference type="RefSeq" id="WP_011725573.1">
    <property type="nucleotide sequence ID" value="NC_008595.1"/>
</dbReference>
<dbReference type="SMR" id="A0QIQ8"/>
<dbReference type="KEGG" id="mav:MAV_3619"/>
<dbReference type="HOGENOM" id="CLU_053306_4_0_11"/>
<dbReference type="UniPathway" id="UPA00034">
    <property type="reaction ID" value="UER00025"/>
</dbReference>
<dbReference type="Proteomes" id="UP000001574">
    <property type="component" value="Chromosome"/>
</dbReference>
<dbReference type="GO" id="GO:0005829">
    <property type="term" value="C:cytosol"/>
    <property type="evidence" value="ECO:0007669"/>
    <property type="project" value="TreeGrafter"/>
</dbReference>
<dbReference type="GO" id="GO:0008837">
    <property type="term" value="F:diaminopimelate epimerase activity"/>
    <property type="evidence" value="ECO:0007669"/>
    <property type="project" value="UniProtKB-UniRule"/>
</dbReference>
<dbReference type="GO" id="GO:0009089">
    <property type="term" value="P:lysine biosynthetic process via diaminopimelate"/>
    <property type="evidence" value="ECO:0007669"/>
    <property type="project" value="UniProtKB-UniRule"/>
</dbReference>
<dbReference type="Gene3D" id="3.10.310.10">
    <property type="entry name" value="Diaminopimelate Epimerase, Chain A, domain 1"/>
    <property type="match status" value="2"/>
</dbReference>
<dbReference type="HAMAP" id="MF_00197">
    <property type="entry name" value="DAP_epimerase"/>
    <property type="match status" value="1"/>
</dbReference>
<dbReference type="InterPro" id="IPR018510">
    <property type="entry name" value="DAP_epimerase_AS"/>
</dbReference>
<dbReference type="InterPro" id="IPR001653">
    <property type="entry name" value="DAP_epimerase_DapF"/>
</dbReference>
<dbReference type="NCBIfam" id="TIGR00652">
    <property type="entry name" value="DapF"/>
    <property type="match status" value="1"/>
</dbReference>
<dbReference type="PANTHER" id="PTHR31689:SF0">
    <property type="entry name" value="DIAMINOPIMELATE EPIMERASE"/>
    <property type="match status" value="1"/>
</dbReference>
<dbReference type="PANTHER" id="PTHR31689">
    <property type="entry name" value="DIAMINOPIMELATE EPIMERASE, CHLOROPLASTIC"/>
    <property type="match status" value="1"/>
</dbReference>
<dbReference type="Pfam" id="PF01678">
    <property type="entry name" value="DAP_epimerase"/>
    <property type="match status" value="2"/>
</dbReference>
<dbReference type="SUPFAM" id="SSF54506">
    <property type="entry name" value="Diaminopimelate epimerase-like"/>
    <property type="match status" value="2"/>
</dbReference>
<dbReference type="PROSITE" id="PS01326">
    <property type="entry name" value="DAP_EPIMERASE"/>
    <property type="match status" value="1"/>
</dbReference>
<gene>
    <name evidence="1" type="primary">dapF</name>
    <name type="ordered locus">MAV_3619</name>
</gene>
<feature type="chain" id="PRO_1000011906" description="Diaminopimelate epimerase">
    <location>
        <begin position="1"/>
        <end position="294"/>
    </location>
</feature>
<feature type="active site" description="Proton donor" evidence="1">
    <location>
        <position position="87"/>
    </location>
</feature>
<feature type="active site" description="Proton acceptor" evidence="1">
    <location>
        <position position="230"/>
    </location>
</feature>
<feature type="binding site" evidence="1">
    <location>
        <position position="11"/>
    </location>
    <ligand>
        <name>substrate</name>
    </ligand>
</feature>
<feature type="binding site" evidence="1">
    <location>
        <position position="78"/>
    </location>
    <ligand>
        <name>substrate</name>
    </ligand>
</feature>
<feature type="binding site" evidence="1">
    <location>
        <begin position="88"/>
        <end position="89"/>
    </location>
    <ligand>
        <name>substrate</name>
    </ligand>
</feature>
<feature type="binding site" evidence="1">
    <location>
        <position position="167"/>
    </location>
    <ligand>
        <name>substrate</name>
    </ligand>
</feature>
<feature type="binding site" evidence="1">
    <location>
        <position position="203"/>
    </location>
    <ligand>
        <name>substrate</name>
    </ligand>
</feature>
<feature type="binding site" evidence="1">
    <location>
        <begin position="221"/>
        <end position="222"/>
    </location>
    <ligand>
        <name>substrate</name>
    </ligand>
</feature>
<feature type="binding site" evidence="1">
    <location>
        <begin position="231"/>
        <end position="232"/>
    </location>
    <ligand>
        <name>substrate</name>
    </ligand>
</feature>
<feature type="site" description="Could be important to modulate the pK values of the two catalytic cysteine residues" evidence="1">
    <location>
        <position position="169"/>
    </location>
</feature>
<feature type="site" description="Could be important to modulate the pK values of the two catalytic cysteine residues" evidence="1">
    <location>
        <position position="221"/>
    </location>
</feature>
<comment type="function">
    <text evidence="1">Catalyzes the stereoinversion of LL-2,6-diaminopimelate (L,L-DAP) to meso-diaminopimelate (meso-DAP), a precursor of L-lysine and an essential component of the bacterial peptidoglycan.</text>
</comment>
<comment type="catalytic activity">
    <reaction evidence="1">
        <text>(2S,6S)-2,6-diaminopimelate = meso-2,6-diaminopimelate</text>
        <dbReference type="Rhea" id="RHEA:15393"/>
        <dbReference type="ChEBI" id="CHEBI:57609"/>
        <dbReference type="ChEBI" id="CHEBI:57791"/>
        <dbReference type="EC" id="5.1.1.7"/>
    </reaction>
</comment>
<comment type="pathway">
    <text evidence="1">Amino-acid biosynthesis; L-lysine biosynthesis via DAP pathway; DL-2,6-diaminopimelate from LL-2,6-diaminopimelate: step 1/1.</text>
</comment>
<comment type="subunit">
    <text evidence="1">Homodimer.</text>
</comment>
<comment type="subcellular location">
    <subcellularLocation>
        <location evidence="1">Cytoplasm</location>
    </subcellularLocation>
</comment>
<comment type="similarity">
    <text evidence="1">Belongs to the diaminopimelate epimerase family.</text>
</comment>
<name>DAPF_MYCA1</name>
<evidence type="ECO:0000255" key="1">
    <source>
        <dbReference type="HAMAP-Rule" id="MF_00197"/>
    </source>
</evidence>
<sequence>MKFAKGHGTENDFVLLCDTPAELRLTAAGVAALCDRRRGLGADGVLRVTTAGAAAAAGVLDRLPDGVAGDDWYMDYRNSDGSVAQMCGNGVRVFAHYLRASGLETRDEFVVGSLAGPRPVTVHAADATGADVSVDMGKANTLGSGGKAFEATVGGRRFAGLAVDVGNPHLACLDPELSVDELAALDVAAPVSFDAAQFPDGVNVEVLTAPAAGVVHMRVHERGVGETRSCGTGTVAAAVAALTAAGADTGTLTVRVPGGDVVVTVTDATSYLRGPSVLVAHGEISEEWWQQAQR</sequence>
<keyword id="KW-0028">Amino-acid biosynthesis</keyword>
<keyword id="KW-0963">Cytoplasm</keyword>
<keyword id="KW-0413">Isomerase</keyword>
<keyword id="KW-0457">Lysine biosynthesis</keyword>
<reference key="1">
    <citation type="submission" date="2006-10" db="EMBL/GenBank/DDBJ databases">
        <authorList>
            <person name="Fleischmann R.D."/>
            <person name="Dodson R.J."/>
            <person name="Haft D.H."/>
            <person name="Merkel J.S."/>
            <person name="Nelson W.C."/>
            <person name="Fraser C.M."/>
        </authorList>
    </citation>
    <scope>NUCLEOTIDE SEQUENCE [LARGE SCALE GENOMIC DNA]</scope>
    <source>
        <strain>104</strain>
    </source>
</reference>
<accession>A0QIQ8</accession>
<protein>
    <recommendedName>
        <fullName evidence="1">Diaminopimelate epimerase</fullName>
        <shortName evidence="1">DAP epimerase</shortName>
        <ecNumber evidence="1">5.1.1.7</ecNumber>
    </recommendedName>
    <alternativeName>
        <fullName evidence="1">PLP-independent amino acid racemase</fullName>
    </alternativeName>
</protein>
<organism>
    <name type="scientific">Mycobacterium avium (strain 104)</name>
    <dbReference type="NCBI Taxonomy" id="243243"/>
    <lineage>
        <taxon>Bacteria</taxon>
        <taxon>Bacillati</taxon>
        <taxon>Actinomycetota</taxon>
        <taxon>Actinomycetes</taxon>
        <taxon>Mycobacteriales</taxon>
        <taxon>Mycobacteriaceae</taxon>
        <taxon>Mycobacterium</taxon>
        <taxon>Mycobacterium avium complex (MAC)</taxon>
    </lineage>
</organism>